<proteinExistence type="inferred from homology"/>
<sequence length="217" mass="25600">MRLRHKPYAMDRINEYSHIVIGNPEERAGNWKEVFGNEQPIHIEVGTGRGRFMYDMAKANPHINYIGIEKFTSVVVDALDKLIEEELPNLKLINKDAEDLTVFFAKGEIDRVYLNFSDPWPKKRHTKRRLTYKTFLRNYEEVLVEGGEIHFKTDNQGLFEYSLMSMAEYGMLLTYLSLDLHNSDFEGNIMTEYEEKFSSKGHRIYRVEAKYRTEPMQ</sequence>
<comment type="function">
    <text evidence="2">Catalyzes the formation of N(7)-methylguanine at position 46 (m7G46) in tRNA.</text>
</comment>
<comment type="catalytic activity">
    <reaction evidence="2">
        <text>guanosine(46) in tRNA + S-adenosyl-L-methionine = N(7)-methylguanosine(46) in tRNA + S-adenosyl-L-homocysteine</text>
        <dbReference type="Rhea" id="RHEA:42708"/>
        <dbReference type="Rhea" id="RHEA-COMP:10188"/>
        <dbReference type="Rhea" id="RHEA-COMP:10189"/>
        <dbReference type="ChEBI" id="CHEBI:57856"/>
        <dbReference type="ChEBI" id="CHEBI:59789"/>
        <dbReference type="ChEBI" id="CHEBI:74269"/>
        <dbReference type="ChEBI" id="CHEBI:74480"/>
        <dbReference type="EC" id="2.1.1.33"/>
    </reaction>
</comment>
<comment type="pathway">
    <text evidence="2">tRNA modification; N(7)-methylguanine-tRNA biosynthesis.</text>
</comment>
<comment type="similarity">
    <text evidence="2">Belongs to the class I-like SAM-binding methyltransferase superfamily. TrmB family.</text>
</comment>
<evidence type="ECO:0000250" key="1"/>
<evidence type="ECO:0000255" key="2">
    <source>
        <dbReference type="HAMAP-Rule" id="MF_01057"/>
    </source>
</evidence>
<accession>B7HSN5</accession>
<feature type="chain" id="PRO_1000136341" description="tRNA (guanine-N(7)-)-methyltransferase">
    <location>
        <begin position="1"/>
        <end position="217"/>
    </location>
</feature>
<feature type="active site" evidence="1">
    <location>
        <position position="118"/>
    </location>
</feature>
<feature type="binding site" evidence="2">
    <location>
        <position position="44"/>
    </location>
    <ligand>
        <name>S-adenosyl-L-methionine</name>
        <dbReference type="ChEBI" id="CHEBI:59789"/>
    </ligand>
</feature>
<feature type="binding site" evidence="2">
    <location>
        <position position="69"/>
    </location>
    <ligand>
        <name>S-adenosyl-L-methionine</name>
        <dbReference type="ChEBI" id="CHEBI:59789"/>
    </ligand>
</feature>
<feature type="binding site" evidence="2">
    <location>
        <position position="96"/>
    </location>
    <ligand>
        <name>S-adenosyl-L-methionine</name>
        <dbReference type="ChEBI" id="CHEBI:59789"/>
    </ligand>
</feature>
<feature type="binding site" evidence="2">
    <location>
        <position position="118"/>
    </location>
    <ligand>
        <name>S-adenosyl-L-methionine</name>
        <dbReference type="ChEBI" id="CHEBI:59789"/>
    </ligand>
</feature>
<feature type="binding site" evidence="2">
    <location>
        <position position="122"/>
    </location>
    <ligand>
        <name>substrate</name>
    </ligand>
</feature>
<feature type="binding site" evidence="2">
    <location>
        <position position="154"/>
    </location>
    <ligand>
        <name>substrate</name>
    </ligand>
</feature>
<feature type="binding site" evidence="2">
    <location>
        <begin position="191"/>
        <end position="194"/>
    </location>
    <ligand>
        <name>substrate</name>
    </ligand>
</feature>
<reference key="1">
    <citation type="submission" date="2008-10" db="EMBL/GenBank/DDBJ databases">
        <title>Genome sequence of Bacillus cereus AH187.</title>
        <authorList>
            <person name="Dodson R.J."/>
            <person name="Durkin A.S."/>
            <person name="Rosovitz M.J."/>
            <person name="Rasko D.A."/>
            <person name="Kolsto A.B."/>
            <person name="Okstad O.A."/>
            <person name="Ravel J."/>
            <person name="Sutton G."/>
        </authorList>
    </citation>
    <scope>NUCLEOTIDE SEQUENCE [LARGE SCALE GENOMIC DNA]</scope>
    <source>
        <strain>AH187</strain>
    </source>
</reference>
<gene>
    <name evidence="2" type="primary">trmB</name>
    <name type="ordered locus">BCAH187_A4833</name>
</gene>
<dbReference type="EC" id="2.1.1.33" evidence="2"/>
<dbReference type="EMBL" id="CP001177">
    <property type="protein sequence ID" value="ACJ79615.1"/>
    <property type="molecule type" value="Genomic_DNA"/>
</dbReference>
<dbReference type="SMR" id="B7HSN5"/>
<dbReference type="KEGG" id="bcr:BCAH187_A4833"/>
<dbReference type="HOGENOM" id="CLU_050910_2_1_9"/>
<dbReference type="UniPathway" id="UPA00989"/>
<dbReference type="Proteomes" id="UP000002214">
    <property type="component" value="Chromosome"/>
</dbReference>
<dbReference type="GO" id="GO:0043527">
    <property type="term" value="C:tRNA methyltransferase complex"/>
    <property type="evidence" value="ECO:0007669"/>
    <property type="project" value="TreeGrafter"/>
</dbReference>
<dbReference type="GO" id="GO:0008176">
    <property type="term" value="F:tRNA (guanine(46)-N7)-methyltransferase activity"/>
    <property type="evidence" value="ECO:0007669"/>
    <property type="project" value="UniProtKB-UniRule"/>
</dbReference>
<dbReference type="CDD" id="cd02440">
    <property type="entry name" value="AdoMet_MTases"/>
    <property type="match status" value="1"/>
</dbReference>
<dbReference type="FunFam" id="3.40.50.150:FF:000035">
    <property type="entry name" value="tRNA (guanine-N(7)-)-methyltransferase"/>
    <property type="match status" value="1"/>
</dbReference>
<dbReference type="Gene3D" id="3.40.50.150">
    <property type="entry name" value="Vaccinia Virus protein VP39"/>
    <property type="match status" value="1"/>
</dbReference>
<dbReference type="HAMAP" id="MF_01057">
    <property type="entry name" value="tRNA_methyltr_TrmB"/>
    <property type="match status" value="1"/>
</dbReference>
<dbReference type="InterPro" id="IPR029063">
    <property type="entry name" value="SAM-dependent_MTases_sf"/>
</dbReference>
<dbReference type="InterPro" id="IPR003358">
    <property type="entry name" value="tRNA_(Gua-N-7)_MeTrfase_Trmb"/>
</dbReference>
<dbReference type="InterPro" id="IPR055361">
    <property type="entry name" value="tRNA_methyltr_TrmB_bact"/>
</dbReference>
<dbReference type="NCBIfam" id="NF001080">
    <property type="entry name" value="PRK00121.2-2"/>
    <property type="match status" value="1"/>
</dbReference>
<dbReference type="NCBIfam" id="TIGR00091">
    <property type="entry name" value="tRNA (guanosine(46)-N7)-methyltransferase TrmB"/>
    <property type="match status" value="1"/>
</dbReference>
<dbReference type="PANTHER" id="PTHR23417">
    <property type="entry name" value="3-DEOXY-D-MANNO-OCTULOSONIC-ACID TRANSFERASE/TRNA GUANINE-N 7 - -METHYLTRANSFERASE"/>
    <property type="match status" value="1"/>
</dbReference>
<dbReference type="PANTHER" id="PTHR23417:SF14">
    <property type="entry name" value="PENTACOTRIPEPTIDE-REPEAT REGION OF PRORP DOMAIN-CONTAINING PROTEIN"/>
    <property type="match status" value="1"/>
</dbReference>
<dbReference type="Pfam" id="PF02390">
    <property type="entry name" value="Methyltransf_4"/>
    <property type="match status" value="1"/>
</dbReference>
<dbReference type="SUPFAM" id="SSF53335">
    <property type="entry name" value="S-adenosyl-L-methionine-dependent methyltransferases"/>
    <property type="match status" value="1"/>
</dbReference>
<dbReference type="PROSITE" id="PS51625">
    <property type="entry name" value="SAM_MT_TRMB"/>
    <property type="match status" value="1"/>
</dbReference>
<organism>
    <name type="scientific">Bacillus cereus (strain AH187)</name>
    <dbReference type="NCBI Taxonomy" id="405534"/>
    <lineage>
        <taxon>Bacteria</taxon>
        <taxon>Bacillati</taxon>
        <taxon>Bacillota</taxon>
        <taxon>Bacilli</taxon>
        <taxon>Bacillales</taxon>
        <taxon>Bacillaceae</taxon>
        <taxon>Bacillus</taxon>
        <taxon>Bacillus cereus group</taxon>
    </lineage>
</organism>
<name>TRMB_BACC7</name>
<keyword id="KW-0489">Methyltransferase</keyword>
<keyword id="KW-0949">S-adenosyl-L-methionine</keyword>
<keyword id="KW-0808">Transferase</keyword>
<keyword id="KW-0819">tRNA processing</keyword>
<protein>
    <recommendedName>
        <fullName evidence="2">tRNA (guanine-N(7)-)-methyltransferase</fullName>
        <ecNumber evidence="2">2.1.1.33</ecNumber>
    </recommendedName>
    <alternativeName>
        <fullName evidence="2">tRNA (guanine(46)-N(7))-methyltransferase</fullName>
    </alternativeName>
    <alternativeName>
        <fullName evidence="2">tRNA(m7G46)-methyltransferase</fullName>
    </alternativeName>
</protein>